<sequence>GDLPICGETCFGGTCNTPGCVCAWPVCNR</sequence>
<proteinExistence type="evidence at protein level"/>
<comment type="function">
    <text evidence="1">Probably participates in a plant defense mechanism.</text>
</comment>
<comment type="domain">
    <text evidence="4">The presence of a 'disulfide through disulfide knot' structurally defines this protein as a knottin.</text>
</comment>
<comment type="PTM">
    <text evidence="1 2">This is a cyclic peptide.</text>
</comment>
<comment type="mass spectrometry"/>
<comment type="similarity">
    <text evidence="1">Belongs to the cyclotide family. Moebius subfamily.</text>
</comment>
<comment type="caution">
    <text evidence="1">This peptide is cyclic. The start position was chosen by similarity to Oak1 (kalata B1) for which the DNA sequence is known.</text>
</comment>
<accession>C0HL28</accession>
<name>CYPLB_PSYLE</name>
<dbReference type="SMR" id="C0HL28"/>
<dbReference type="GO" id="GO:0006952">
    <property type="term" value="P:defense response"/>
    <property type="evidence" value="ECO:0007669"/>
    <property type="project" value="UniProtKB-KW"/>
</dbReference>
<dbReference type="InterPro" id="IPR005535">
    <property type="entry name" value="Cyclotide"/>
</dbReference>
<dbReference type="InterPro" id="IPR012324">
    <property type="entry name" value="Cyclotide_moebius_CS"/>
</dbReference>
<dbReference type="InterPro" id="IPR036146">
    <property type="entry name" value="Cyclotide_sf"/>
</dbReference>
<dbReference type="Pfam" id="PF03784">
    <property type="entry name" value="Cyclotide"/>
    <property type="match status" value="1"/>
</dbReference>
<dbReference type="SUPFAM" id="SSF57038">
    <property type="entry name" value="Cyclotides"/>
    <property type="match status" value="1"/>
</dbReference>
<dbReference type="PROSITE" id="PS51052">
    <property type="entry name" value="CYCLOTIDE"/>
    <property type="match status" value="1"/>
</dbReference>
<dbReference type="PROSITE" id="PS60009">
    <property type="entry name" value="CYCLOTIDE_MOEBIUS"/>
    <property type="match status" value="1"/>
</dbReference>
<reference evidence="4" key="1">
    <citation type="journal article" date="2016" name="J. Nat. Prod.">
        <title>Isolation and Characterization of Cyclotides from Brazilian Psychotria: Significance in Plant Defense and Co-occurrence with Antioxidant Alkaloids.</title>
        <authorList>
            <person name="Matsuura H.N."/>
            <person name="Poth A.G."/>
            <person name="Yendo A.C."/>
            <person name="Fett-Neto A.G."/>
            <person name="Craik D.J."/>
        </authorList>
    </citation>
    <scope>PROTEIN SEQUENCE</scope>
    <scope>MASS SPECTROMETRY</scope>
    <scope>IDENTIFICATION BY MASS SPECTROMETRY</scope>
    <scope>CYCLIZATION</scope>
    <source>
        <tissue evidence="3">Leaf</tissue>
    </source>
</reference>
<protein>
    <recommendedName>
        <fullName evidence="3">Cyclotide psyleio B</fullName>
    </recommendedName>
</protein>
<organism>
    <name type="scientific">Psychotria leiocarpa</name>
    <dbReference type="NCBI Taxonomy" id="2022332"/>
    <lineage>
        <taxon>Eukaryota</taxon>
        <taxon>Viridiplantae</taxon>
        <taxon>Streptophyta</taxon>
        <taxon>Embryophyta</taxon>
        <taxon>Tracheophyta</taxon>
        <taxon>Spermatophyta</taxon>
        <taxon>Magnoliopsida</taxon>
        <taxon>eudicotyledons</taxon>
        <taxon>Gunneridae</taxon>
        <taxon>Pentapetalae</taxon>
        <taxon>asterids</taxon>
        <taxon>lamiids</taxon>
        <taxon>Gentianales</taxon>
        <taxon>Rubiaceae</taxon>
        <taxon>Rubioideae</taxon>
        <taxon>Psychotrieae</taxon>
        <taxon>Psychotria</taxon>
    </lineage>
</organism>
<keyword id="KW-0903">Direct protein sequencing</keyword>
<keyword id="KW-1015">Disulfide bond</keyword>
<keyword id="KW-0960">Knottin</keyword>
<keyword id="KW-0611">Plant defense</keyword>
<evidence type="ECO:0000255" key="1">
    <source>
        <dbReference type="PROSITE-ProRule" id="PRU00395"/>
    </source>
</evidence>
<evidence type="ECO:0000269" key="2">
    <source>
    </source>
</evidence>
<evidence type="ECO:0000303" key="3">
    <source>
    </source>
</evidence>
<evidence type="ECO:0000305" key="4"/>
<evidence type="ECO:0000305" key="5">
    <source>
    </source>
</evidence>
<feature type="peptide" id="PRO_0000441793" description="Cyclotide psyleio B" evidence="2">
    <location>
        <begin position="1"/>
        <end position="29"/>
    </location>
</feature>
<feature type="disulfide bond" evidence="1">
    <location>
        <begin position="6"/>
        <end position="20"/>
    </location>
</feature>
<feature type="disulfide bond" evidence="1">
    <location>
        <begin position="10"/>
        <end position="22"/>
    </location>
</feature>
<feature type="disulfide bond" evidence="1">
    <location>
        <begin position="15"/>
        <end position="27"/>
    </location>
</feature>
<feature type="cross-link" description="Cyclopeptide (Gly-Arg)" evidence="5">
    <location>
        <begin position="1"/>
        <end position="29"/>
    </location>
</feature>
<feature type="unsure residue" description="L or I" evidence="3">
    <location>
        <position position="3"/>
    </location>
</feature>
<feature type="unsure residue" description="I or L" evidence="3">
    <location>
        <position position="5"/>
    </location>
</feature>